<organism>
    <name type="scientific">Homo sapiens</name>
    <name type="common">Human</name>
    <dbReference type="NCBI Taxonomy" id="9606"/>
    <lineage>
        <taxon>Eukaryota</taxon>
        <taxon>Metazoa</taxon>
        <taxon>Chordata</taxon>
        <taxon>Craniata</taxon>
        <taxon>Vertebrata</taxon>
        <taxon>Euteleostomi</taxon>
        <taxon>Mammalia</taxon>
        <taxon>Eutheria</taxon>
        <taxon>Euarchontoglires</taxon>
        <taxon>Primates</taxon>
        <taxon>Haplorrhini</taxon>
        <taxon>Catarrhini</taxon>
        <taxon>Hominidae</taxon>
        <taxon>Homo</taxon>
    </lineage>
</organism>
<proteinExistence type="evidence at protein level"/>
<accession>Q86VR8</accession>
<accession>B2RCA9</accession>
<accession>Q9UGK6</accession>
<feature type="signal peptide" evidence="2">
    <location>
        <begin position="1"/>
        <end position="24"/>
    </location>
</feature>
<feature type="chain" id="PRO_0000333045" description="Four-jointed box protein 1">
    <location>
        <begin position="25"/>
        <end position="437"/>
    </location>
</feature>
<feature type="region of interest" description="Disordered" evidence="3">
    <location>
        <begin position="33"/>
        <end position="66"/>
    </location>
</feature>
<feature type="region of interest" description="Disordered" evidence="3">
    <location>
        <begin position="88"/>
        <end position="116"/>
    </location>
</feature>
<feature type="compositionally biased region" description="Pro residues" evidence="3">
    <location>
        <begin position="57"/>
        <end position="66"/>
    </location>
</feature>
<feature type="glycosylation site" description="N-linked (GlcNAc...) asparagine" evidence="2">
    <location>
        <position position="248"/>
    </location>
</feature>
<feature type="sequence variant" id="VAR_043117" description="In dbSNP:rs12792700.">
    <original>M</original>
    <variation>L</variation>
    <location>
        <position position="153"/>
    </location>
</feature>
<feature type="sequence variant" id="VAR_062233" description="In dbSNP:rs12286850.">
    <original>R</original>
    <variation>H</variation>
    <location>
        <position position="415"/>
    </location>
</feature>
<feature type="sequence conflict" description="In Ref. 1; CAB53246." evidence="4" ref="1">
    <original>P</original>
    <variation>R</variation>
    <location>
        <position position="58"/>
    </location>
</feature>
<dbReference type="EMBL" id="AJ245599">
    <property type="protein sequence ID" value="CAB53246.1"/>
    <property type="status" value="ALT_FRAME"/>
    <property type="molecule type" value="mRNA"/>
</dbReference>
<dbReference type="EMBL" id="AK315015">
    <property type="protein sequence ID" value="BAG37506.1"/>
    <property type="molecule type" value="mRNA"/>
</dbReference>
<dbReference type="EMBL" id="CH471064">
    <property type="protein sequence ID" value="EAW68138.1"/>
    <property type="molecule type" value="Genomic_DNA"/>
</dbReference>
<dbReference type="EMBL" id="BC049171">
    <property type="protein sequence ID" value="AAH49171.1"/>
    <property type="molecule type" value="mRNA"/>
</dbReference>
<dbReference type="EMBL" id="BC071898">
    <property type="protein sequence ID" value="AAH71898.1"/>
    <property type="molecule type" value="mRNA"/>
</dbReference>
<dbReference type="CCDS" id="CCDS44570.1"/>
<dbReference type="RefSeq" id="NP_055159.2">
    <property type="nucleotide sequence ID" value="NM_014344.3"/>
</dbReference>
<dbReference type="SMR" id="Q86VR8"/>
<dbReference type="BioGRID" id="117297">
    <property type="interactions" value="5"/>
</dbReference>
<dbReference type="FunCoup" id="Q86VR8">
    <property type="interactions" value="228"/>
</dbReference>
<dbReference type="IntAct" id="Q86VR8">
    <property type="interactions" value="4"/>
</dbReference>
<dbReference type="STRING" id="9606.ENSP00000400223"/>
<dbReference type="GlyCosmos" id="Q86VR8">
    <property type="glycosylation" value="1 site, No reported glycans"/>
</dbReference>
<dbReference type="GlyGen" id="Q86VR8">
    <property type="glycosylation" value="1 site"/>
</dbReference>
<dbReference type="iPTMnet" id="Q86VR8"/>
<dbReference type="PhosphoSitePlus" id="Q86VR8"/>
<dbReference type="BioMuta" id="FJX1"/>
<dbReference type="DMDM" id="74727610"/>
<dbReference type="jPOST" id="Q86VR8"/>
<dbReference type="MassIVE" id="Q86VR8"/>
<dbReference type="PaxDb" id="9606-ENSP00000400223"/>
<dbReference type="PeptideAtlas" id="Q86VR8"/>
<dbReference type="ProteomicsDB" id="70063"/>
<dbReference type="Antibodypedia" id="25981">
    <property type="antibodies" value="86 antibodies from 23 providers"/>
</dbReference>
<dbReference type="DNASU" id="24147"/>
<dbReference type="Ensembl" id="ENST00000317811.6">
    <property type="protein sequence ID" value="ENSP00000400223.1"/>
    <property type="gene ID" value="ENSG00000179431.7"/>
</dbReference>
<dbReference type="GeneID" id="24147"/>
<dbReference type="KEGG" id="hsa:24147"/>
<dbReference type="MANE-Select" id="ENST00000317811.6">
    <property type="protein sequence ID" value="ENSP00000400223.1"/>
    <property type="RefSeq nucleotide sequence ID" value="NM_014344.4"/>
    <property type="RefSeq protein sequence ID" value="NP_055159.2"/>
</dbReference>
<dbReference type="UCSC" id="uc001mwh.4">
    <property type="organism name" value="human"/>
</dbReference>
<dbReference type="AGR" id="HGNC:17166"/>
<dbReference type="CTD" id="24147"/>
<dbReference type="DisGeNET" id="24147"/>
<dbReference type="GeneCards" id="FJX1"/>
<dbReference type="HGNC" id="HGNC:17166">
    <property type="gene designation" value="FJX1"/>
</dbReference>
<dbReference type="HPA" id="ENSG00000179431">
    <property type="expression patterns" value="Low tissue specificity"/>
</dbReference>
<dbReference type="MIM" id="612206">
    <property type="type" value="gene"/>
</dbReference>
<dbReference type="neXtProt" id="NX_Q86VR8"/>
<dbReference type="OpenTargets" id="ENSG00000179431"/>
<dbReference type="PharmGKB" id="PA28151"/>
<dbReference type="VEuPathDB" id="HostDB:ENSG00000179431"/>
<dbReference type="eggNOG" id="ENOG502QUJ4">
    <property type="taxonomic scope" value="Eukaryota"/>
</dbReference>
<dbReference type="GeneTree" id="ENSGT00390000016768"/>
<dbReference type="HOGENOM" id="CLU_033850_0_0_1"/>
<dbReference type="InParanoid" id="Q86VR8"/>
<dbReference type="OMA" id="WSEWLED"/>
<dbReference type="OrthoDB" id="10055077at2759"/>
<dbReference type="PAN-GO" id="Q86VR8">
    <property type="GO annotations" value="2 GO annotations based on evolutionary models"/>
</dbReference>
<dbReference type="PhylomeDB" id="Q86VR8"/>
<dbReference type="TreeFam" id="TF324767"/>
<dbReference type="PathwayCommons" id="Q86VR8"/>
<dbReference type="SignaLink" id="Q86VR8"/>
<dbReference type="BioGRID-ORCS" id="24147">
    <property type="hits" value="15 hits in 1148 CRISPR screens"/>
</dbReference>
<dbReference type="ChiTaRS" id="FJX1">
    <property type="organism name" value="human"/>
</dbReference>
<dbReference type="GenomeRNAi" id="24147"/>
<dbReference type="Pharos" id="Q86VR8">
    <property type="development level" value="Tbio"/>
</dbReference>
<dbReference type="PRO" id="PR:Q86VR8"/>
<dbReference type="Proteomes" id="UP000005640">
    <property type="component" value="Chromosome 11"/>
</dbReference>
<dbReference type="RNAct" id="Q86VR8">
    <property type="molecule type" value="protein"/>
</dbReference>
<dbReference type="Bgee" id="ENSG00000179431">
    <property type="expression patterns" value="Expressed in ventricular zone and 143 other cell types or tissues"/>
</dbReference>
<dbReference type="GO" id="GO:0005615">
    <property type="term" value="C:extracellular space"/>
    <property type="evidence" value="ECO:0000318"/>
    <property type="project" value="GO_Central"/>
</dbReference>
<dbReference type="GO" id="GO:0007267">
    <property type="term" value="P:cell-cell signaling"/>
    <property type="evidence" value="ECO:0000318"/>
    <property type="project" value="GO_Central"/>
</dbReference>
<dbReference type="GO" id="GO:0010842">
    <property type="term" value="P:retina layer formation"/>
    <property type="evidence" value="ECO:0007669"/>
    <property type="project" value="Ensembl"/>
</dbReference>
<dbReference type="CDD" id="cd10468">
    <property type="entry name" value="Four-jointed-like_C"/>
    <property type="match status" value="1"/>
</dbReference>
<dbReference type="InterPro" id="IPR024868">
    <property type="entry name" value="FJX1/FJ"/>
</dbReference>
<dbReference type="PANTHER" id="PTHR13147">
    <property type="entry name" value="FOUR-JOINTED BOX PROTEIN 1"/>
    <property type="match status" value="1"/>
</dbReference>
<dbReference type="PANTHER" id="PTHR13147:SF5">
    <property type="entry name" value="FOUR-JOINTED BOX PROTEIN 1"/>
    <property type="match status" value="1"/>
</dbReference>
<dbReference type="PRINTS" id="PR02072">
    <property type="entry name" value="4JOINTEDBOX1"/>
</dbReference>
<protein>
    <recommendedName>
        <fullName>Four-jointed box protein 1</fullName>
    </recommendedName>
    <alternativeName>
        <fullName>Four-jointed protein homolog</fullName>
    </alternativeName>
</protein>
<comment type="function">
    <text evidence="1">Acts as an inhibitor of dendrite extension and branching.</text>
</comment>
<comment type="subcellular location">
    <subcellularLocation>
        <location evidence="1">Secreted</location>
    </subcellularLocation>
</comment>
<comment type="PTM">
    <text evidence="1">Glycosylated.</text>
</comment>
<comment type="PTM">
    <text evidence="1">Undergoes proteolytic cleavage.</text>
</comment>
<comment type="similarity">
    <text evidence="4">Belongs to the FJX1/FJ family.</text>
</comment>
<comment type="sequence caution" evidence="4">
    <conflict type="frameshift">
        <sequence resource="EMBL-CDS" id="CAB53246"/>
    </conflict>
</comment>
<name>FJX1_HUMAN</name>
<sequence>MGRRMRGAAATAGLWLLALGSLLALWGGLLPPRTELPASRPPEDRLPRRPARSGGPAPAPRFPLPPPLAWDARGGSLKTFRALLTLAAGADGPPRQSRSEPRWHVSARQPRPEESAAVHGGVFWSRGLEEQVPPGFSEAQAAAWLEAARGARMVALERGGCGRSSNRLARFADGTRACVRYGINPEQIQGEALSYYLARLLGLQRHVPPLALARVEARGAQWAQVQEELRAAHWTEGSVVSLTRWLPNLTDVVVPAPWRSEDGRLRPLRDAGGELANLSQAELVDLVQWTDLILFDYLTANFDRLVSNLFSLQWDPRVMQRATSNLHRGPGGALVFLDNEAGLVHGYRVAGMWDKYNEPLLQSVCVFRERTARRVLELHRGQDAAARLLRLYRRHEPRFPELAALADPHAQLLQRRLDFLAKHILHCKAKYGRRSGT</sequence>
<reference key="1">
    <citation type="journal article" date="1999" name="Genome Res.">
        <title>A 7.5 Mb sequence-ready PAC contig and gene expression map of human chromosome 11p13-p14.1.</title>
        <authorList>
            <person name="Gawin B."/>
            <person name="Niederfuehr A."/>
            <person name="Schumacher N."/>
            <person name="Hummerich H."/>
            <person name="Little P.F.R."/>
            <person name="Gessler M."/>
        </authorList>
    </citation>
    <scope>NUCLEOTIDE SEQUENCE [MRNA]</scope>
    <source>
        <tissue>Fetal kidney</tissue>
    </source>
</reference>
<reference key="2">
    <citation type="journal article" date="2004" name="Nat. Genet.">
        <title>Complete sequencing and characterization of 21,243 full-length human cDNAs.</title>
        <authorList>
            <person name="Ota T."/>
            <person name="Suzuki Y."/>
            <person name="Nishikawa T."/>
            <person name="Otsuki T."/>
            <person name="Sugiyama T."/>
            <person name="Irie R."/>
            <person name="Wakamatsu A."/>
            <person name="Hayashi K."/>
            <person name="Sato H."/>
            <person name="Nagai K."/>
            <person name="Kimura K."/>
            <person name="Makita H."/>
            <person name="Sekine M."/>
            <person name="Obayashi M."/>
            <person name="Nishi T."/>
            <person name="Shibahara T."/>
            <person name="Tanaka T."/>
            <person name="Ishii S."/>
            <person name="Yamamoto J."/>
            <person name="Saito K."/>
            <person name="Kawai Y."/>
            <person name="Isono Y."/>
            <person name="Nakamura Y."/>
            <person name="Nagahari K."/>
            <person name="Murakami K."/>
            <person name="Yasuda T."/>
            <person name="Iwayanagi T."/>
            <person name="Wagatsuma M."/>
            <person name="Shiratori A."/>
            <person name="Sudo H."/>
            <person name="Hosoiri T."/>
            <person name="Kaku Y."/>
            <person name="Kodaira H."/>
            <person name="Kondo H."/>
            <person name="Sugawara M."/>
            <person name="Takahashi M."/>
            <person name="Kanda K."/>
            <person name="Yokoi T."/>
            <person name="Furuya T."/>
            <person name="Kikkawa E."/>
            <person name="Omura Y."/>
            <person name="Abe K."/>
            <person name="Kamihara K."/>
            <person name="Katsuta N."/>
            <person name="Sato K."/>
            <person name="Tanikawa M."/>
            <person name="Yamazaki M."/>
            <person name="Ninomiya K."/>
            <person name="Ishibashi T."/>
            <person name="Yamashita H."/>
            <person name="Murakawa K."/>
            <person name="Fujimori K."/>
            <person name="Tanai H."/>
            <person name="Kimata M."/>
            <person name="Watanabe M."/>
            <person name="Hiraoka S."/>
            <person name="Chiba Y."/>
            <person name="Ishida S."/>
            <person name="Ono Y."/>
            <person name="Takiguchi S."/>
            <person name="Watanabe S."/>
            <person name="Yosida M."/>
            <person name="Hotuta T."/>
            <person name="Kusano J."/>
            <person name="Kanehori K."/>
            <person name="Takahashi-Fujii A."/>
            <person name="Hara H."/>
            <person name="Tanase T.-O."/>
            <person name="Nomura Y."/>
            <person name="Togiya S."/>
            <person name="Komai F."/>
            <person name="Hara R."/>
            <person name="Takeuchi K."/>
            <person name="Arita M."/>
            <person name="Imose N."/>
            <person name="Musashino K."/>
            <person name="Yuuki H."/>
            <person name="Oshima A."/>
            <person name="Sasaki N."/>
            <person name="Aotsuka S."/>
            <person name="Yoshikawa Y."/>
            <person name="Matsunawa H."/>
            <person name="Ichihara T."/>
            <person name="Shiohata N."/>
            <person name="Sano S."/>
            <person name="Moriya S."/>
            <person name="Momiyama H."/>
            <person name="Satoh N."/>
            <person name="Takami S."/>
            <person name="Terashima Y."/>
            <person name="Suzuki O."/>
            <person name="Nakagawa S."/>
            <person name="Senoh A."/>
            <person name="Mizoguchi H."/>
            <person name="Goto Y."/>
            <person name="Shimizu F."/>
            <person name="Wakebe H."/>
            <person name="Hishigaki H."/>
            <person name="Watanabe T."/>
            <person name="Sugiyama A."/>
            <person name="Takemoto M."/>
            <person name="Kawakami B."/>
            <person name="Yamazaki M."/>
            <person name="Watanabe K."/>
            <person name="Kumagai A."/>
            <person name="Itakura S."/>
            <person name="Fukuzumi Y."/>
            <person name="Fujimori Y."/>
            <person name="Komiyama M."/>
            <person name="Tashiro H."/>
            <person name="Tanigami A."/>
            <person name="Fujiwara T."/>
            <person name="Ono T."/>
            <person name="Yamada K."/>
            <person name="Fujii Y."/>
            <person name="Ozaki K."/>
            <person name="Hirao M."/>
            <person name="Ohmori Y."/>
            <person name="Kawabata A."/>
            <person name="Hikiji T."/>
            <person name="Kobatake N."/>
            <person name="Inagaki H."/>
            <person name="Ikema Y."/>
            <person name="Okamoto S."/>
            <person name="Okitani R."/>
            <person name="Kawakami T."/>
            <person name="Noguchi S."/>
            <person name="Itoh T."/>
            <person name="Shigeta K."/>
            <person name="Senba T."/>
            <person name="Matsumura K."/>
            <person name="Nakajima Y."/>
            <person name="Mizuno T."/>
            <person name="Morinaga M."/>
            <person name="Sasaki M."/>
            <person name="Togashi T."/>
            <person name="Oyama M."/>
            <person name="Hata H."/>
            <person name="Watanabe M."/>
            <person name="Komatsu T."/>
            <person name="Mizushima-Sugano J."/>
            <person name="Satoh T."/>
            <person name="Shirai Y."/>
            <person name="Takahashi Y."/>
            <person name="Nakagawa K."/>
            <person name="Okumura K."/>
            <person name="Nagase T."/>
            <person name="Nomura N."/>
            <person name="Kikuchi H."/>
            <person name="Masuho Y."/>
            <person name="Yamashita R."/>
            <person name="Nakai K."/>
            <person name="Yada T."/>
            <person name="Nakamura Y."/>
            <person name="Ohara O."/>
            <person name="Isogai T."/>
            <person name="Sugano S."/>
        </authorList>
    </citation>
    <scope>NUCLEOTIDE SEQUENCE [LARGE SCALE MRNA]</scope>
</reference>
<reference key="3">
    <citation type="submission" date="2005-09" db="EMBL/GenBank/DDBJ databases">
        <authorList>
            <person name="Mural R.J."/>
            <person name="Istrail S."/>
            <person name="Sutton G.G."/>
            <person name="Florea L."/>
            <person name="Halpern A.L."/>
            <person name="Mobarry C.M."/>
            <person name="Lippert R."/>
            <person name="Walenz B."/>
            <person name="Shatkay H."/>
            <person name="Dew I."/>
            <person name="Miller J.R."/>
            <person name="Flanigan M.J."/>
            <person name="Edwards N.J."/>
            <person name="Bolanos R."/>
            <person name="Fasulo D."/>
            <person name="Halldorsson B.V."/>
            <person name="Hannenhalli S."/>
            <person name="Turner R."/>
            <person name="Yooseph S."/>
            <person name="Lu F."/>
            <person name="Nusskern D.R."/>
            <person name="Shue B.C."/>
            <person name="Zheng X.H."/>
            <person name="Zhong F."/>
            <person name="Delcher A.L."/>
            <person name="Huson D.H."/>
            <person name="Kravitz S.A."/>
            <person name="Mouchard L."/>
            <person name="Reinert K."/>
            <person name="Remington K.A."/>
            <person name="Clark A.G."/>
            <person name="Waterman M.S."/>
            <person name="Eichler E.E."/>
            <person name="Adams M.D."/>
            <person name="Hunkapiller M.W."/>
            <person name="Myers E.W."/>
            <person name="Venter J.C."/>
        </authorList>
    </citation>
    <scope>NUCLEOTIDE SEQUENCE [LARGE SCALE GENOMIC DNA]</scope>
</reference>
<reference key="4">
    <citation type="journal article" date="2004" name="Genome Res.">
        <title>The status, quality, and expansion of the NIH full-length cDNA project: the Mammalian Gene Collection (MGC).</title>
        <authorList>
            <consortium name="The MGC Project Team"/>
        </authorList>
    </citation>
    <scope>NUCLEOTIDE SEQUENCE [LARGE SCALE MRNA]</scope>
    <source>
        <tissue>Skin</tissue>
    </source>
</reference>
<evidence type="ECO:0000250" key="1"/>
<evidence type="ECO:0000255" key="2"/>
<evidence type="ECO:0000256" key="3">
    <source>
        <dbReference type="SAM" id="MobiDB-lite"/>
    </source>
</evidence>
<evidence type="ECO:0000305" key="4"/>
<gene>
    <name type="primary">FJX1</name>
</gene>
<keyword id="KW-0325">Glycoprotein</keyword>
<keyword id="KW-1267">Proteomics identification</keyword>
<keyword id="KW-1185">Reference proteome</keyword>
<keyword id="KW-0964">Secreted</keyword>
<keyword id="KW-0732">Signal</keyword>